<comment type="miscellaneous">
    <text evidence="1">Almost completely overlaps YNL149C.</text>
</comment>
<comment type="caution">
    <text evidence="2">Product of a dubious gene prediction unlikely to encode a functional protein. Because of that it is not part of the S.cerevisiae S288c complete/reference proteome set.</text>
</comment>
<gene>
    <name type="ordered locus">YNL150W</name>
    <name type="ORF">N1773</name>
</gene>
<sequence>MMQVATSVMVRLFYQKTIEKLKTKQCHNDKEEPIHTQRAYSSSSSSISASLSGSNPWFLLLASSKAFSNNSCCLLTLLLVFLPQPKEVVSAVAASSGLSIRSFDLFSSLSRLSFSTWAANCFFANSLDAIFLKSK</sequence>
<reference key="1">
    <citation type="journal article" date="1996" name="Yeast">
        <title>The sequence of 36.8 kb from the left arm of chromosome XIV reveals 24 complete open reading frames: 18 correspond to new genes, one of which encodes a protein similar to the human myotonic dystrophy kinase.</title>
        <authorList>
            <person name="Nasr F."/>
            <person name="Becam A.-M."/>
            <person name="Herbert C.J."/>
        </authorList>
    </citation>
    <scope>NUCLEOTIDE SEQUENCE [GENOMIC DNA]</scope>
    <source>
        <strain>ATCC 96604 / S288c / FY1679</strain>
    </source>
</reference>
<reference key="2">
    <citation type="journal article" date="1997" name="Nature">
        <title>The nucleotide sequence of Saccharomyces cerevisiae chromosome XIV and its evolutionary implications.</title>
        <authorList>
            <person name="Philippsen P."/>
            <person name="Kleine K."/>
            <person name="Poehlmann R."/>
            <person name="Duesterhoeft A."/>
            <person name="Hamberg K."/>
            <person name="Hegemann J.H."/>
            <person name="Obermaier B."/>
            <person name="Urrestarazu L.A."/>
            <person name="Aert R."/>
            <person name="Albermann K."/>
            <person name="Altmann R."/>
            <person name="Andre B."/>
            <person name="Baladron V."/>
            <person name="Ballesta J.P.G."/>
            <person name="Becam A.-M."/>
            <person name="Beinhauer J.D."/>
            <person name="Boskovic J."/>
            <person name="Buitrago M.J."/>
            <person name="Bussereau F."/>
            <person name="Coster F."/>
            <person name="Crouzet M."/>
            <person name="D'Angelo M."/>
            <person name="Dal Pero F."/>
            <person name="De Antoni A."/>
            <person name="del Rey F."/>
            <person name="Doignon F."/>
            <person name="Domdey H."/>
            <person name="Dubois E."/>
            <person name="Fiedler T.A."/>
            <person name="Fleig U."/>
            <person name="Floeth M."/>
            <person name="Fritz C."/>
            <person name="Gaillardin C."/>
            <person name="Garcia-Cantalejo J.M."/>
            <person name="Glansdorff N."/>
            <person name="Goffeau A."/>
            <person name="Gueldener U."/>
            <person name="Herbert C.J."/>
            <person name="Heumann K."/>
            <person name="Heuss-Neitzel D."/>
            <person name="Hilbert H."/>
            <person name="Hinni K."/>
            <person name="Iraqui Houssaini I."/>
            <person name="Jacquet M."/>
            <person name="Jimenez A."/>
            <person name="Jonniaux J.-L."/>
            <person name="Karpfinger-Hartl L."/>
            <person name="Lanfranchi G."/>
            <person name="Lepingle A."/>
            <person name="Levesque H."/>
            <person name="Lyck R."/>
            <person name="Maftahi M."/>
            <person name="Mallet L."/>
            <person name="Maurer C.T.C."/>
            <person name="Messenguy F."/>
            <person name="Mewes H.-W."/>
            <person name="Moestl D."/>
            <person name="Nasr F."/>
            <person name="Nicaud J.-M."/>
            <person name="Niedenthal R.K."/>
            <person name="Pandolfo D."/>
            <person name="Pierard A."/>
            <person name="Piravandi E."/>
            <person name="Planta R.J."/>
            <person name="Pohl T.M."/>
            <person name="Purnelle B."/>
            <person name="Rebischung C."/>
            <person name="Remacha M.A."/>
            <person name="Revuelta J.L."/>
            <person name="Rinke M."/>
            <person name="Saiz J.E."/>
            <person name="Sartorello F."/>
            <person name="Scherens B."/>
            <person name="Sen-Gupta M."/>
            <person name="Soler-Mira A."/>
            <person name="Urbanus J.H.M."/>
            <person name="Valle G."/>
            <person name="Van Dyck L."/>
            <person name="Verhasselt P."/>
            <person name="Vierendeels F."/>
            <person name="Vissers S."/>
            <person name="Voet M."/>
            <person name="Volckaert G."/>
            <person name="Wach A."/>
            <person name="Wambutt R."/>
            <person name="Wedler H."/>
            <person name="Zollner A."/>
            <person name="Hani J."/>
        </authorList>
    </citation>
    <scope>NUCLEOTIDE SEQUENCE [LARGE SCALE GENOMIC DNA]</scope>
    <source>
        <strain>ATCC 204508 / S288c</strain>
    </source>
</reference>
<reference key="3">
    <citation type="journal article" date="2014" name="G3 (Bethesda)">
        <title>The reference genome sequence of Saccharomyces cerevisiae: Then and now.</title>
        <authorList>
            <person name="Engel S.R."/>
            <person name="Dietrich F.S."/>
            <person name="Fisk D.G."/>
            <person name="Binkley G."/>
            <person name="Balakrishnan R."/>
            <person name="Costanzo M.C."/>
            <person name="Dwight S.S."/>
            <person name="Hitz B.C."/>
            <person name="Karra K."/>
            <person name="Nash R.S."/>
            <person name="Weng S."/>
            <person name="Wong E.D."/>
            <person name="Lloyd P."/>
            <person name="Skrzypek M.S."/>
            <person name="Miyasato S.R."/>
            <person name="Simison M."/>
            <person name="Cherry J.M."/>
        </authorList>
    </citation>
    <scope>GENOME REANNOTATION</scope>
    <source>
        <strain>ATCC 204508 / S288c</strain>
    </source>
</reference>
<reference key="4">
    <citation type="journal article" date="1995" name="Yeast">
        <title>A 43.5 kb segment of yeast chromosome XIV, which contains MFA2, MEP2, CAP/SRV2, NAM9, FKB1/FPR1/RBP1, MOM22 and CPT1, predicts an adenosine deaminase gene and 14 new open reading frames.</title>
        <authorList>
            <person name="Mallet L."/>
            <person name="Bussereau F."/>
            <person name="Jacquet M."/>
        </authorList>
    </citation>
    <scope>NUCLEOTIDE SEQUENCE [GENOMIC DNA] OF 104-135</scope>
    <source>
        <strain>ATCC 204508 / S288c</strain>
    </source>
</reference>
<proteinExistence type="uncertain"/>
<evidence type="ECO:0000305" key="1"/>
<evidence type="ECO:0000305" key="2">
    <source>
    </source>
</evidence>
<organism>
    <name type="scientific">Saccharomyces cerevisiae (strain ATCC 204508 / S288c)</name>
    <name type="common">Baker's yeast</name>
    <dbReference type="NCBI Taxonomy" id="559292"/>
    <lineage>
        <taxon>Eukaryota</taxon>
        <taxon>Fungi</taxon>
        <taxon>Dikarya</taxon>
        <taxon>Ascomycota</taxon>
        <taxon>Saccharomycotina</taxon>
        <taxon>Saccharomycetes</taxon>
        <taxon>Saccharomycetales</taxon>
        <taxon>Saccharomycetaceae</taxon>
        <taxon>Saccharomyces</taxon>
    </lineage>
</organism>
<feature type="chain" id="PRO_0000203420" description="Putative uncharacterized protein YNL150W">
    <location>
        <begin position="1"/>
        <end position="135"/>
    </location>
</feature>
<accession>P53902</accession>
<dbReference type="EMBL" id="X92517">
    <property type="protein sequence ID" value="CAA63289.1"/>
    <property type="molecule type" value="Genomic_DNA"/>
</dbReference>
<dbReference type="EMBL" id="Z71424">
    <property type="protein sequence ID" value="CAA96032.1"/>
    <property type="molecule type" value="Genomic_DNA"/>
</dbReference>
<dbReference type="EMBL" id="Z71426">
    <property type="protein sequence ID" value="CAA96036.1"/>
    <property type="molecule type" value="Genomic_DNA"/>
</dbReference>
<dbReference type="PIR" id="S60977">
    <property type="entry name" value="S60977"/>
</dbReference>
<dbReference type="STRING" id="4932.YNL150W"/>
<dbReference type="PaxDb" id="4932-YNL150W"/>
<dbReference type="EnsemblFungi" id="YNL150W_mRNA">
    <property type="protein sequence ID" value="YNL150W"/>
    <property type="gene ID" value="YNL150W"/>
</dbReference>
<dbReference type="AGR" id="SGD:S000005094"/>
<dbReference type="SGD" id="S000005094">
    <property type="gene designation" value="YNL150W"/>
</dbReference>
<dbReference type="HOGENOM" id="CLU_1887364_0_0_1"/>
<name>YNP0_YEAST</name>
<protein>
    <recommendedName>
        <fullName>Putative uncharacterized protein YNL150W</fullName>
    </recommendedName>
</protein>